<keyword id="KW-0119">Carbohydrate metabolism</keyword>
<keyword id="KW-0136">Cellulose degradation</keyword>
<keyword id="KW-0326">Glycosidase</keyword>
<keyword id="KW-0378">Hydrolase</keyword>
<keyword id="KW-0624">Polysaccharide degradation</keyword>
<keyword id="KW-0732">Signal</keyword>
<reference key="1">
    <citation type="journal article" date="1991" name="Agric. Biol. Chem.">
        <title>Characterization and structure of the cellulase gene of Bacillus subtilis BSE616.</title>
        <authorList>
            <person name="Park S.H."/>
            <person name="Kim H.K."/>
            <person name="Pack M.Y."/>
        </authorList>
    </citation>
    <scope>NUCLEOTIDE SEQUENCE [GENOMIC DNA]</scope>
    <source>
        <strain>BSE616</strain>
    </source>
</reference>
<organism>
    <name type="scientific">Bacillus subtilis</name>
    <dbReference type="NCBI Taxonomy" id="1423"/>
    <lineage>
        <taxon>Bacteria</taxon>
        <taxon>Bacillati</taxon>
        <taxon>Bacillota</taxon>
        <taxon>Bacilli</taxon>
        <taxon>Bacillales</taxon>
        <taxon>Bacillaceae</taxon>
        <taxon>Bacillus</taxon>
    </lineage>
</organism>
<gene>
    <name type="primary">bglC</name>
</gene>
<protein>
    <recommendedName>
        <fullName>Endoglucanase</fullName>
        <ecNumber>3.2.1.4</ecNumber>
    </recommendedName>
    <alternativeName>
        <fullName>Carboxymethyl-cellulase</fullName>
        <shortName>CMCase</shortName>
        <shortName>Cellulase</shortName>
    </alternativeName>
    <alternativeName>
        <fullName>Endo-1,4-beta-glucanase</fullName>
    </alternativeName>
</protein>
<comment type="catalytic activity">
    <reaction>
        <text>Endohydrolysis of (1-&gt;4)-beta-D-glucosidic linkages in cellulose, lichenin and cereal beta-D-glucans.</text>
        <dbReference type="EC" id="3.2.1.4"/>
    </reaction>
</comment>
<comment type="similarity">
    <text evidence="3">Belongs to the glycosyl hydrolase 5 (cellulase A) family.</text>
</comment>
<sequence length="499" mass="55169">MKRSISIFITCLLITLLTMGGMLASPASAAGTKTPVAKNGQLSIKGTQLVNRDGKAVQLKGISSHGLQWYGEYVNKDSLKWLRDDWGITVFRAAMYTADGGIIDNPSVKNKMKEAVEAAKELGIYVIIDWHILNDGNPNQNKEKAKEFFKEMSSLYGNTPNVIYEIANEPNGDVNWKRDIKPYAEEVISVIRKNDPDNIIIVGTGTWSQDVNDAADDQLKDANVMDALHFYAGTHGQFLRDKANYALSKGAPIFVTEWGTSDASGNGGVFLDQSREWLKYLDSKTISWVNWNLSDKQESSSALKPGASKTGGWRLSDLSASGTFVRENILGTKDSTKDIPETPAKDKPTQENGISVQYRAGDGSMNSNQIRPQLQIKNNGNTTVDLKDVTARYWYNAKNKGQNVDCDYAQLGCGNVTYKFVTLHKPKQGADTYLELGFKNGTLAPGASTGNIQLRLHNDDWSNYAQSGDYSFFKSNTFKTTKKITLYDQGKLIWGTEPN</sequence>
<dbReference type="EC" id="3.2.1.4"/>
<dbReference type="EMBL" id="D01057">
    <property type="protein sequence ID" value="BAA00859.1"/>
    <property type="molecule type" value="Genomic_DNA"/>
</dbReference>
<dbReference type="PIR" id="JN0111">
    <property type="entry name" value="JN0111"/>
</dbReference>
<dbReference type="BMRB" id="P23549"/>
<dbReference type="SMR" id="P23549"/>
<dbReference type="CAZy" id="CBM3">
    <property type="family name" value="Carbohydrate-Binding Module Family 3"/>
</dbReference>
<dbReference type="CAZy" id="GH5">
    <property type="family name" value="Glycoside Hydrolase Family 5"/>
</dbReference>
<dbReference type="GO" id="GO:0008810">
    <property type="term" value="F:cellulase activity"/>
    <property type="evidence" value="ECO:0007669"/>
    <property type="project" value="UniProtKB-EC"/>
</dbReference>
<dbReference type="GO" id="GO:0030248">
    <property type="term" value="F:cellulose binding"/>
    <property type="evidence" value="ECO:0007669"/>
    <property type="project" value="InterPro"/>
</dbReference>
<dbReference type="GO" id="GO:0030245">
    <property type="term" value="P:cellulose catabolic process"/>
    <property type="evidence" value="ECO:0007669"/>
    <property type="project" value="UniProtKB-KW"/>
</dbReference>
<dbReference type="Gene3D" id="2.60.40.710">
    <property type="entry name" value="Endoglucanase-like"/>
    <property type="match status" value="1"/>
</dbReference>
<dbReference type="Gene3D" id="3.20.20.80">
    <property type="entry name" value="Glycosidases"/>
    <property type="match status" value="1"/>
</dbReference>
<dbReference type="InterPro" id="IPR008965">
    <property type="entry name" value="CBM2/CBM3_carb-bd_dom_sf"/>
</dbReference>
<dbReference type="InterPro" id="IPR001956">
    <property type="entry name" value="CBM3"/>
</dbReference>
<dbReference type="InterPro" id="IPR036966">
    <property type="entry name" value="CBM3_sf"/>
</dbReference>
<dbReference type="InterPro" id="IPR001547">
    <property type="entry name" value="Glyco_hydro_5"/>
</dbReference>
<dbReference type="InterPro" id="IPR018087">
    <property type="entry name" value="Glyco_hydro_5_CS"/>
</dbReference>
<dbReference type="InterPro" id="IPR017853">
    <property type="entry name" value="Glycoside_hydrolase_SF"/>
</dbReference>
<dbReference type="PANTHER" id="PTHR34142">
    <property type="entry name" value="ENDO-BETA-1,4-GLUCANASE A"/>
    <property type="match status" value="1"/>
</dbReference>
<dbReference type="PANTHER" id="PTHR34142:SF1">
    <property type="entry name" value="GLYCOSIDE HYDROLASE FAMILY 5 DOMAIN-CONTAINING PROTEIN"/>
    <property type="match status" value="1"/>
</dbReference>
<dbReference type="Pfam" id="PF00942">
    <property type="entry name" value="CBM_3"/>
    <property type="match status" value="1"/>
</dbReference>
<dbReference type="Pfam" id="PF00150">
    <property type="entry name" value="Cellulase"/>
    <property type="match status" value="1"/>
</dbReference>
<dbReference type="SMART" id="SM01067">
    <property type="entry name" value="CBM_3"/>
    <property type="match status" value="1"/>
</dbReference>
<dbReference type="SUPFAM" id="SSF51445">
    <property type="entry name" value="(Trans)glycosidases"/>
    <property type="match status" value="1"/>
</dbReference>
<dbReference type="SUPFAM" id="SSF49384">
    <property type="entry name" value="Carbohydrate-binding domain"/>
    <property type="match status" value="1"/>
</dbReference>
<dbReference type="PROSITE" id="PS51172">
    <property type="entry name" value="CBM3"/>
    <property type="match status" value="1"/>
</dbReference>
<dbReference type="PROSITE" id="PS00659">
    <property type="entry name" value="GLYCOSYL_HYDROL_F5"/>
    <property type="match status" value="1"/>
</dbReference>
<feature type="signal peptide">
    <location>
        <begin position="1"/>
        <end position="29"/>
    </location>
</feature>
<feature type="chain" id="PRO_0000007841" description="Endoglucanase">
    <location>
        <begin position="30"/>
        <end position="499"/>
    </location>
</feature>
<feature type="domain" description="CBM3" evidence="2">
    <location>
        <begin position="350"/>
        <end position="499"/>
    </location>
</feature>
<feature type="active site" description="Proton donor" evidence="1">
    <location>
        <position position="169"/>
    </location>
</feature>
<feature type="active site" description="Nucleophile" evidence="1">
    <location>
        <position position="257"/>
    </location>
</feature>
<feature type="binding site" evidence="1">
    <location>
        <position position="65"/>
    </location>
    <ligand>
        <name>substrate</name>
    </ligand>
</feature>
<feature type="binding site" evidence="1">
    <location>
        <begin position="69"/>
        <end position="70"/>
    </location>
    <ligand>
        <name>substrate</name>
    </ligand>
</feature>
<feature type="binding site" evidence="1">
    <location>
        <position position="96"/>
    </location>
    <ligand>
        <name>substrate</name>
    </ligand>
</feature>
<feature type="binding site" evidence="1">
    <location>
        <position position="131"/>
    </location>
    <ligand>
        <name>substrate</name>
    </ligand>
</feature>
<feature type="binding site" evidence="1">
    <location>
        <position position="231"/>
    </location>
    <ligand>
        <name>substrate</name>
    </ligand>
</feature>
<feature type="binding site" evidence="1">
    <location>
        <begin position="263"/>
        <end position="264"/>
    </location>
    <ligand>
        <name>substrate</name>
    </ligand>
</feature>
<feature type="binding site" evidence="1">
    <location>
        <position position="291"/>
    </location>
    <ligand>
        <name>substrate</name>
    </ligand>
</feature>
<feature type="binding site" evidence="1">
    <location>
        <begin position="296"/>
        <end position="298"/>
    </location>
    <ligand>
        <name>substrate</name>
    </ligand>
</feature>
<name>GUN3_BACIU</name>
<proteinExistence type="inferred from homology"/>
<evidence type="ECO:0000250" key="1">
    <source>
        <dbReference type="UniProtKB" id="O85465"/>
    </source>
</evidence>
<evidence type="ECO:0000255" key="2">
    <source>
        <dbReference type="PROSITE-ProRule" id="PRU00513"/>
    </source>
</evidence>
<evidence type="ECO:0000305" key="3"/>
<accession>P23549</accession>